<proteinExistence type="inferred from homology"/>
<dbReference type="EC" id="5.1.3.3"/>
<dbReference type="EMBL" id="L42023">
    <property type="protein sequence ID" value="AAC22477.1"/>
    <property type="molecule type" value="Genomic_DNA"/>
</dbReference>
<dbReference type="EMBL" id="X65934">
    <property type="protein sequence ID" value="CAA46732.1"/>
    <property type="molecule type" value="Genomic_DNA"/>
</dbReference>
<dbReference type="PIR" id="C64096">
    <property type="entry name" value="C64096"/>
</dbReference>
<dbReference type="RefSeq" id="NP_438978.1">
    <property type="nucleotide sequence ID" value="NC_000907.1"/>
</dbReference>
<dbReference type="SMR" id="P31765"/>
<dbReference type="STRING" id="71421.HI_0818"/>
<dbReference type="EnsemblBacteria" id="AAC22477">
    <property type="protein sequence ID" value="AAC22477"/>
    <property type="gene ID" value="HI_0818"/>
</dbReference>
<dbReference type="KEGG" id="hin:HI_0818"/>
<dbReference type="PATRIC" id="fig|71421.8.peg.859"/>
<dbReference type="eggNOG" id="COG2017">
    <property type="taxonomic scope" value="Bacteria"/>
</dbReference>
<dbReference type="HOGENOM" id="CLU_031753_1_0_6"/>
<dbReference type="OrthoDB" id="9779408at2"/>
<dbReference type="PhylomeDB" id="P31765"/>
<dbReference type="BioCyc" id="HINF71421:G1GJ1-859-MONOMER"/>
<dbReference type="UniPathway" id="UPA00242"/>
<dbReference type="Proteomes" id="UP000000579">
    <property type="component" value="Chromosome"/>
</dbReference>
<dbReference type="GO" id="GO:0005737">
    <property type="term" value="C:cytoplasm"/>
    <property type="evidence" value="ECO:0000318"/>
    <property type="project" value="GO_Central"/>
</dbReference>
<dbReference type="GO" id="GO:0004034">
    <property type="term" value="F:aldose 1-epimerase activity"/>
    <property type="evidence" value="ECO:0000318"/>
    <property type="project" value="GO_Central"/>
</dbReference>
<dbReference type="GO" id="GO:0030246">
    <property type="term" value="F:carbohydrate binding"/>
    <property type="evidence" value="ECO:0007669"/>
    <property type="project" value="InterPro"/>
</dbReference>
<dbReference type="GO" id="GO:0033499">
    <property type="term" value="P:galactose catabolic process via UDP-galactose, Leloir pathway"/>
    <property type="evidence" value="ECO:0000318"/>
    <property type="project" value="GO_Central"/>
</dbReference>
<dbReference type="GO" id="GO:0006006">
    <property type="term" value="P:glucose metabolic process"/>
    <property type="evidence" value="ECO:0000318"/>
    <property type="project" value="GO_Central"/>
</dbReference>
<dbReference type="CDD" id="cd09019">
    <property type="entry name" value="galactose_mutarotase_like"/>
    <property type="match status" value="1"/>
</dbReference>
<dbReference type="Gene3D" id="2.70.98.10">
    <property type="match status" value="1"/>
</dbReference>
<dbReference type="InterPro" id="IPR018052">
    <property type="entry name" value="Ald1_epimerase_CS"/>
</dbReference>
<dbReference type="InterPro" id="IPR013458">
    <property type="entry name" value="Ald_epimerase_bac"/>
</dbReference>
<dbReference type="InterPro" id="IPR015443">
    <property type="entry name" value="Aldose_1-epimerase"/>
</dbReference>
<dbReference type="InterPro" id="IPR008183">
    <property type="entry name" value="Aldose_1/G6P_1-epimerase"/>
</dbReference>
<dbReference type="InterPro" id="IPR011013">
    <property type="entry name" value="Gal_mutarotase_sf_dom"/>
</dbReference>
<dbReference type="InterPro" id="IPR047215">
    <property type="entry name" value="Galactose_mutarotase-like"/>
</dbReference>
<dbReference type="InterPro" id="IPR014718">
    <property type="entry name" value="GH-type_carb-bd"/>
</dbReference>
<dbReference type="NCBIfam" id="TIGR02636">
    <property type="entry name" value="galM_Leloir"/>
    <property type="match status" value="1"/>
</dbReference>
<dbReference type="NCBIfam" id="NF008277">
    <property type="entry name" value="PRK11055.1"/>
    <property type="match status" value="1"/>
</dbReference>
<dbReference type="PANTHER" id="PTHR10091">
    <property type="entry name" value="ALDOSE-1-EPIMERASE"/>
    <property type="match status" value="1"/>
</dbReference>
<dbReference type="PANTHER" id="PTHR10091:SF0">
    <property type="entry name" value="GALACTOSE MUTAROTASE"/>
    <property type="match status" value="1"/>
</dbReference>
<dbReference type="Pfam" id="PF01263">
    <property type="entry name" value="Aldose_epim"/>
    <property type="match status" value="1"/>
</dbReference>
<dbReference type="PIRSF" id="PIRSF005096">
    <property type="entry name" value="GALM"/>
    <property type="match status" value="1"/>
</dbReference>
<dbReference type="SUPFAM" id="SSF74650">
    <property type="entry name" value="Galactose mutarotase-like"/>
    <property type="match status" value="1"/>
</dbReference>
<dbReference type="PROSITE" id="PS00545">
    <property type="entry name" value="ALDOSE_1_EPIMERASE"/>
    <property type="match status" value="1"/>
</dbReference>
<name>GALM_HAEIN</name>
<sequence>MLEQTTFNAPDGAPYQLITLQNENGMRVQFMDWGATWLSCKVPVNDTLREVLLGCKVDNYPTHQSYLGASVGRYANRIANAQFELNGELIKLSSNQGKHQLHGGEGFDKRRWNIQECGENFVCFSLHSVDGDQGFPGNVDVSVTYTLTGDNSVKIEYAGMCDKDTALNLTNHTYFNLENAEQGSDVREHTLRLNADFYLPVDNEGIPNSPLKHVVNTSFDFRIAKPIKQDFLQGDQQATKGYDHSFIVNKAWQKPCVLLTSPTGDLSLEVRTSQAALQVYTGNYLAGTPTRNGELYADFSGIALETQCLPDTPNHPEWQNYGGIQKAGGRYYQWTEFKFK</sequence>
<gene>
    <name type="primary">galM</name>
    <name type="synonym">mro</name>
    <name type="ordered locus">HI_0818</name>
</gene>
<keyword id="KW-0119">Carbohydrate metabolism</keyword>
<keyword id="KW-0963">Cytoplasm</keyword>
<keyword id="KW-0413">Isomerase</keyword>
<keyword id="KW-1185">Reference proteome</keyword>
<feature type="chain" id="PRO_0000197445" description="Aldose 1-epimerase">
    <location>
        <begin position="1"/>
        <end position="340"/>
    </location>
</feature>
<feature type="active site" description="Proton donor" evidence="2">
    <location>
        <position position="172"/>
    </location>
</feature>
<feature type="active site" description="Proton acceptor" evidence="1">
    <location>
        <position position="305"/>
    </location>
</feature>
<feature type="binding site" evidence="1">
    <location>
        <position position="77"/>
    </location>
    <ligand>
        <name>substrate</name>
    </ligand>
</feature>
<feature type="binding site" evidence="1">
    <location>
        <position position="243"/>
    </location>
    <ligand>
        <name>substrate</name>
    </ligand>
</feature>
<feature type="sequence variant" description="In strain: RM 7004.">
    <original>V</original>
    <variation>I</variation>
    <location>
        <position position="42"/>
    </location>
</feature>
<feature type="sequence variant" description="In strain: RM 7004.">
    <original>D</original>
    <variation>G</variation>
    <location>
        <position position="46"/>
    </location>
</feature>
<feature type="sequence variant" description="In strain: RM 7004.">
    <original>D</original>
    <variation>E</variation>
    <location>
        <position position="58"/>
    </location>
</feature>
<feature type="sequence variant" description="In strain: RM 7004.">
    <original>N</original>
    <variation>K</variation>
    <location>
        <position position="113"/>
    </location>
</feature>
<protein>
    <recommendedName>
        <fullName>Aldose 1-epimerase</fullName>
        <ecNumber>5.1.3.3</ecNumber>
    </recommendedName>
    <alternativeName>
        <fullName>Galactose mutarotase</fullName>
    </alternativeName>
    <alternativeName>
        <fullName>Type-1 mutarotase</fullName>
    </alternativeName>
</protein>
<evidence type="ECO:0000250" key="1"/>
<evidence type="ECO:0000255" key="2">
    <source>
        <dbReference type="PROSITE-ProRule" id="PRU10126"/>
    </source>
</evidence>
<evidence type="ECO:0000305" key="3"/>
<accession>P31765</accession>
<comment type="function">
    <text evidence="1">Mutarotase converts alpha-aldose to the beta-anomer. It is active on D-glucose, L-arabinose, D-xylose, D-galactose, maltose and lactose (By similarity).</text>
</comment>
<comment type="catalytic activity">
    <reaction evidence="2">
        <text>alpha-D-glucose = beta-D-glucose</text>
        <dbReference type="Rhea" id="RHEA:10264"/>
        <dbReference type="ChEBI" id="CHEBI:15903"/>
        <dbReference type="ChEBI" id="CHEBI:17925"/>
        <dbReference type="EC" id="5.1.3.3"/>
    </reaction>
</comment>
<comment type="pathway">
    <text>Carbohydrate metabolism; hexose metabolism.</text>
</comment>
<comment type="subcellular location">
    <subcellularLocation>
        <location evidence="3">Cytoplasm</location>
    </subcellularLocation>
</comment>
<comment type="similarity">
    <text evidence="3">Belongs to the aldose epimerase family.</text>
</comment>
<reference key="1">
    <citation type="journal article" date="1995" name="Science">
        <title>Whole-genome random sequencing and assembly of Haemophilus influenzae Rd.</title>
        <authorList>
            <person name="Fleischmann R.D."/>
            <person name="Adams M.D."/>
            <person name="White O."/>
            <person name="Clayton R.A."/>
            <person name="Kirkness E.F."/>
            <person name="Kerlavage A.R."/>
            <person name="Bult C.J."/>
            <person name="Tomb J.-F."/>
            <person name="Dougherty B.A."/>
            <person name="Merrick J.M."/>
            <person name="McKenney K."/>
            <person name="Sutton G.G."/>
            <person name="FitzHugh W."/>
            <person name="Fields C.A."/>
            <person name="Gocayne J.D."/>
            <person name="Scott J.D."/>
            <person name="Shirley R."/>
            <person name="Liu L.-I."/>
            <person name="Glodek A."/>
            <person name="Kelley J.M."/>
            <person name="Weidman J.F."/>
            <person name="Phillips C.A."/>
            <person name="Spriggs T."/>
            <person name="Hedblom E."/>
            <person name="Cotton M.D."/>
            <person name="Utterback T.R."/>
            <person name="Hanna M.C."/>
            <person name="Nguyen D.T."/>
            <person name="Saudek D.M."/>
            <person name="Brandon R.C."/>
            <person name="Fine L.D."/>
            <person name="Fritchman J.L."/>
            <person name="Fuhrmann J.L."/>
            <person name="Geoghagen N.S.M."/>
            <person name="Gnehm C.L."/>
            <person name="McDonald L.A."/>
            <person name="Small K.V."/>
            <person name="Fraser C.M."/>
            <person name="Smith H.O."/>
            <person name="Venter J.C."/>
        </authorList>
    </citation>
    <scope>NUCLEOTIDE SEQUENCE [LARGE SCALE GENOMIC DNA]</scope>
    <source>
        <strain>ATCC 51907 / DSM 11121 / KW20 / Rd</strain>
    </source>
</reference>
<reference key="2">
    <citation type="journal article" date="1992" name="Mol. Microbiol.">
        <title>The gal locus from Haemophilus influenzae: cloning, sequencing and the use of gal mutants to study lipopolysaccharide.</title>
        <authorList>
            <person name="Maskell D.J."/>
            <person name="Szabo M.J."/>
            <person name="Deadman M.E."/>
            <person name="Moxon E.R."/>
        </authorList>
    </citation>
    <scope>NUCLEOTIDE SEQUENCE [GENOMIC DNA] OF 1-116</scope>
    <source>
        <strain>RM 7004 / Serotype B</strain>
    </source>
</reference>
<organism>
    <name type="scientific">Haemophilus influenzae (strain ATCC 51907 / DSM 11121 / KW20 / Rd)</name>
    <dbReference type="NCBI Taxonomy" id="71421"/>
    <lineage>
        <taxon>Bacteria</taxon>
        <taxon>Pseudomonadati</taxon>
        <taxon>Pseudomonadota</taxon>
        <taxon>Gammaproteobacteria</taxon>
        <taxon>Pasteurellales</taxon>
        <taxon>Pasteurellaceae</taxon>
        <taxon>Haemophilus</taxon>
    </lineage>
</organism>